<accession>L7NCP9</accession>
<sequence length="236" mass="25405">MNLLGFLAVVALSTASVQAGTIDHNQVVPFAQPEATTISQKAAIKFKPQIHITNGCHPYPAVNEAGETSGGLKTSGAPSSSCKGSGWGSQVYGRSTWYNGKWAIMYSWYFPKDSPSTGLGHRHDWEHVVVWIDNPDVANPTILAASPSAHSGYSFYAPPSSDSVGGTSVKVNYESNWPINHALDMTSKSGETQDLIMWDQLTDEARAGLNSADFGDTFAPFTDDNFKTALGKAWPF</sequence>
<gene>
    <name evidence="5" type="primary">NLP3</name>
    <name evidence="4" type="synonym">NPP3</name>
    <name evidence="6" type="ORF">Pc122048</name>
</gene>
<organism>
    <name type="scientific">Phytophthora capsici</name>
    <dbReference type="NCBI Taxonomy" id="4784"/>
    <lineage>
        <taxon>Eukaryota</taxon>
        <taxon>Sar</taxon>
        <taxon>Stramenopiles</taxon>
        <taxon>Oomycota</taxon>
        <taxon>Peronosporales</taxon>
        <taxon>Peronosporaceae</taxon>
        <taxon>Phytophthora</taxon>
    </lineage>
</organism>
<comment type="function">
    <text evidence="2 3">Secreted effector that contributes to virulence during infection by P.capsici (PubMed:24886309, PubMed:29572661). Induces distinct chlorosis at 3 days after inoculation of host C.annuum leaves, and all the chlorotic areas gradually turn brown and become moderately necrotic at 7 days after inoculation. Leads only to chlorotic areas, without necrosis at 7 days after non-host N.benthamiana leaves infection (PubMed:24886309). Induces cell death in hot pepper (PubMed:29572661).</text>
</comment>
<comment type="subcellular location">
    <subcellularLocation>
        <location evidence="8">Secreted</location>
    </subcellularLocation>
</comment>
<comment type="induction">
    <text evidence="2 3">Expression gradually increases to a maximum at 7 days after inoculation of pepper leaves.</text>
</comment>
<comment type="domain">
    <text evidence="10">Key residues/motif important for the effector activities are degenerated in most NLPs, including the nlp24 peptide consisting of the conserved region I (11-aa immunogenic part) and conserved region II (the heptapeptide GHRHDWE motif) that is important for phytotoxic activity.</text>
</comment>
<comment type="similarity">
    <text evidence="7">Belongs to the Necrosis inducing protein (NPP1) family.</text>
</comment>
<feature type="signal peptide" evidence="1">
    <location>
        <begin position="1"/>
        <end position="19"/>
    </location>
</feature>
<feature type="chain" id="PRO_5003982452" description="NLP effector protein 3">
    <location>
        <begin position="20"/>
        <end position="236"/>
    </location>
</feature>
<feature type="short sequence motif" description="Conserved undecapeptide motif I" evidence="10">
    <location>
        <begin position="103"/>
        <end position="113"/>
    </location>
</feature>
<feature type="short sequence motif" description="Hepta-peptide GHRHDWE motif II" evidence="9">
    <location>
        <begin position="120"/>
        <end position="126"/>
    </location>
</feature>
<keyword id="KW-0964">Secreted</keyword>
<keyword id="KW-0732">Signal</keyword>
<keyword id="KW-0843">Virulence</keyword>
<evidence type="ECO:0000255" key="1"/>
<evidence type="ECO:0000269" key="2">
    <source>
    </source>
</evidence>
<evidence type="ECO:0000269" key="3">
    <source>
    </source>
</evidence>
<evidence type="ECO:0000303" key="4">
    <source>
    </source>
</evidence>
<evidence type="ECO:0000303" key="5">
    <source>
    </source>
</evidence>
<evidence type="ECO:0000303" key="6">
    <source>
    </source>
</evidence>
<evidence type="ECO:0000305" key="7"/>
<evidence type="ECO:0000305" key="8">
    <source>
    </source>
</evidence>
<evidence type="ECO:0000305" key="9">
    <source>
    </source>
</evidence>
<evidence type="ECO:0000305" key="10">
    <source>
    </source>
</evidence>
<protein>
    <recommendedName>
        <fullName evidence="5">NLP effector protein 3</fullName>
    </recommendedName>
    <alternativeName>
        <fullName evidence="4">Necrosis-inducing protein 3</fullName>
    </alternativeName>
    <alternativeName>
        <fullName evidence="4">Nep1-like protein 3</fullName>
    </alternativeName>
</protein>
<proteinExistence type="evidence at transcript level"/>
<dbReference type="EMBL" id="HM543169">
    <property type="protein sequence ID" value="AEJ88234.1"/>
    <property type="molecule type" value="Genomic_DNA"/>
</dbReference>
<dbReference type="SMR" id="L7NCP9"/>
<dbReference type="VEuPathDB" id="FungiDB:DVH05_028333"/>
<dbReference type="GO" id="GO:0005576">
    <property type="term" value="C:extracellular region"/>
    <property type="evidence" value="ECO:0007669"/>
    <property type="project" value="UniProtKB-SubCell"/>
</dbReference>
<dbReference type="InterPro" id="IPR008701">
    <property type="entry name" value="NPP1"/>
</dbReference>
<dbReference type="PANTHER" id="PTHR33657">
    <property type="entry name" value="DOMAIN PROTEIN, PUTATIVE (AFU_ORTHOLOGUE AFUA_5G00600)-RELATED"/>
    <property type="match status" value="1"/>
</dbReference>
<dbReference type="PANTHER" id="PTHR33657:SF8">
    <property type="entry name" value="DOMAIN PROTEIN, PUTATIVE (AFU_ORTHOLOGUE AFUA_5G00600)-RELATED"/>
    <property type="match status" value="1"/>
</dbReference>
<dbReference type="Pfam" id="PF05630">
    <property type="entry name" value="NPP1"/>
    <property type="match status" value="1"/>
</dbReference>
<dbReference type="PIRSF" id="PIRSF029958">
    <property type="entry name" value="Necrosis-inducing_protein"/>
    <property type="match status" value="1"/>
</dbReference>
<reference key="1">
    <citation type="journal article" date="2011" name="Genet. Mol. Res.">
        <title>Identification of 18 genes encoding necrosis-inducing proteins from the plant pathogen Phytophthora capsici (Pythiaceae: Oomycetes).</title>
        <authorList>
            <person name="Feng B.Z."/>
            <person name="Li P.Q."/>
            <person name="Fu L."/>
            <person name="Sun B.B."/>
            <person name="Zhang X.G."/>
        </authorList>
    </citation>
    <scope>NUCLEOTIDE SEQUENCE [GENOMIC DNA]</scope>
    <scope>DOMAIN</scope>
</reference>
<reference key="2">
    <citation type="journal article" date="2014" name="BMC Plant Biol.">
        <title>Characterization of necrosis-inducing NLP proteins in Phytophthora capsici.</title>
        <authorList>
            <person name="Feng B.Z."/>
            <person name="Zhu X.P."/>
            <person name="Fu L."/>
            <person name="Lv R.F."/>
            <person name="Storey D."/>
            <person name="Tooley P."/>
            <person name="Zhang X.G."/>
        </authorList>
    </citation>
    <scope>INDUCTION</scope>
    <scope>FUNCTION</scope>
</reference>
<reference key="3">
    <citation type="journal article" date="2018" name="Mol. Genet. Genomics">
        <title>Identification and functional analysis of the NLP-encoding genes from the phytopathogenic oomycete Phytophthora capsici.</title>
        <authorList>
            <person name="Chen X.R."/>
            <person name="Huang S.X."/>
            <person name="Zhang Y."/>
            <person name="Sheng G.L."/>
            <person name="Li Y.P."/>
            <person name="Zhu F."/>
        </authorList>
    </citation>
    <scope>FUNCTION</scope>
    <scope>DOMAIN</scope>
    <scope>INDUCTION</scope>
</reference>
<name>NLP3_PHYCP</name>